<dbReference type="EC" id="2.5.1.-" evidence="1"/>
<dbReference type="EMBL" id="CP001598">
    <property type="protein sequence ID" value="ACQ50871.1"/>
    <property type="molecule type" value="Genomic_DNA"/>
</dbReference>
<dbReference type="RefSeq" id="WP_000938987.1">
    <property type="nucleotide sequence ID" value="NC_012659.1"/>
</dbReference>
<dbReference type="SMR" id="C3P6D6"/>
<dbReference type="GeneID" id="45023793"/>
<dbReference type="KEGG" id="bai:BAA_4133"/>
<dbReference type="HOGENOM" id="CLU_121356_0_0_9"/>
<dbReference type="GO" id="GO:0005737">
    <property type="term" value="C:cytoplasm"/>
    <property type="evidence" value="ECO:0007669"/>
    <property type="project" value="UniProtKB-SubCell"/>
</dbReference>
<dbReference type="GO" id="GO:0000287">
    <property type="term" value="F:magnesium ion binding"/>
    <property type="evidence" value="ECO:0007669"/>
    <property type="project" value="UniProtKB-UniRule"/>
</dbReference>
<dbReference type="GO" id="GO:0016765">
    <property type="term" value="F:transferase activity, transferring alkyl or aryl (other than methyl) groups"/>
    <property type="evidence" value="ECO:0007669"/>
    <property type="project" value="UniProtKB-UniRule"/>
</dbReference>
<dbReference type="GO" id="GO:0046677">
    <property type="term" value="P:response to antibiotic"/>
    <property type="evidence" value="ECO:0007669"/>
    <property type="project" value="UniProtKB-UniRule"/>
</dbReference>
<dbReference type="CDD" id="cd08363">
    <property type="entry name" value="FosB"/>
    <property type="match status" value="1"/>
</dbReference>
<dbReference type="FunFam" id="3.10.180.10:FF:000015">
    <property type="entry name" value="Metallothiol transferase FosB"/>
    <property type="match status" value="1"/>
</dbReference>
<dbReference type="Gene3D" id="3.10.180.10">
    <property type="entry name" value="2,3-Dihydroxybiphenyl 1,2-Dioxygenase, domain 1"/>
    <property type="match status" value="1"/>
</dbReference>
<dbReference type="HAMAP" id="MF_01512">
    <property type="entry name" value="FosB"/>
    <property type="match status" value="1"/>
</dbReference>
<dbReference type="InterPro" id="IPR051332">
    <property type="entry name" value="Fosfomycin_Res_Enzymes"/>
</dbReference>
<dbReference type="InterPro" id="IPR029068">
    <property type="entry name" value="Glyas_Bleomycin-R_OHBP_Dase"/>
</dbReference>
<dbReference type="InterPro" id="IPR004360">
    <property type="entry name" value="Glyas_Fos-R_dOase_dom"/>
</dbReference>
<dbReference type="InterPro" id="IPR022858">
    <property type="entry name" value="Metallothiol_Trafse_FosB"/>
</dbReference>
<dbReference type="InterPro" id="IPR037523">
    <property type="entry name" value="VOC"/>
</dbReference>
<dbReference type="NCBIfam" id="NF000493">
    <property type="entry name" value="Fos_BSH"/>
    <property type="match status" value="1"/>
</dbReference>
<dbReference type="NCBIfam" id="NF003152">
    <property type="entry name" value="PRK04101.1"/>
    <property type="match status" value="1"/>
</dbReference>
<dbReference type="PANTHER" id="PTHR36113:SF6">
    <property type="entry name" value="FOSFOMYCIN RESISTANCE PROTEIN FOSX"/>
    <property type="match status" value="1"/>
</dbReference>
<dbReference type="PANTHER" id="PTHR36113">
    <property type="entry name" value="LYASE, PUTATIVE-RELATED-RELATED"/>
    <property type="match status" value="1"/>
</dbReference>
<dbReference type="Pfam" id="PF00903">
    <property type="entry name" value="Glyoxalase"/>
    <property type="match status" value="1"/>
</dbReference>
<dbReference type="SUPFAM" id="SSF54593">
    <property type="entry name" value="Glyoxalase/Bleomycin resistance protein/Dihydroxybiphenyl dioxygenase"/>
    <property type="match status" value="1"/>
</dbReference>
<dbReference type="PROSITE" id="PS51819">
    <property type="entry name" value="VOC"/>
    <property type="match status" value="1"/>
</dbReference>
<gene>
    <name evidence="1" type="primary">fosB2</name>
    <name type="ordered locus">BAA_4133</name>
</gene>
<feature type="chain" id="PRO_0000383361" description="Metallothiol transferase FosB 2">
    <location>
        <begin position="1"/>
        <end position="139"/>
    </location>
</feature>
<feature type="domain" description="VOC" evidence="2">
    <location>
        <begin position="4"/>
        <end position="119"/>
    </location>
</feature>
<feature type="active site" description="Proton donor/acceptor" evidence="2">
    <location>
        <position position="115"/>
    </location>
</feature>
<feature type="binding site" evidence="1">
    <location>
        <position position="7"/>
    </location>
    <ligand>
        <name>Mg(2+)</name>
        <dbReference type="ChEBI" id="CHEBI:18420"/>
    </ligand>
</feature>
<feature type="binding site" evidence="1">
    <location>
        <position position="66"/>
    </location>
    <ligand>
        <name>Mg(2+)</name>
        <dbReference type="ChEBI" id="CHEBI:18420"/>
    </ligand>
</feature>
<feature type="binding site" evidence="1">
    <location>
        <position position="115"/>
    </location>
    <ligand>
        <name>Mg(2+)</name>
        <dbReference type="ChEBI" id="CHEBI:18420"/>
    </ligand>
</feature>
<keyword id="KW-0046">Antibiotic resistance</keyword>
<keyword id="KW-0963">Cytoplasm</keyword>
<keyword id="KW-0460">Magnesium</keyword>
<keyword id="KW-0479">Metal-binding</keyword>
<keyword id="KW-0808">Transferase</keyword>
<reference key="1">
    <citation type="submission" date="2009-04" db="EMBL/GenBank/DDBJ databases">
        <title>Genome sequence of Bacillus anthracis A0248.</title>
        <authorList>
            <person name="Dodson R.J."/>
            <person name="Munk A.C."/>
            <person name="Bruce D."/>
            <person name="Detter C."/>
            <person name="Tapia R."/>
            <person name="Sutton G."/>
            <person name="Sims D."/>
            <person name="Brettin T."/>
        </authorList>
    </citation>
    <scope>NUCLEOTIDE SEQUENCE [LARGE SCALE GENOMIC DNA]</scope>
    <source>
        <strain>A0248</strain>
    </source>
</reference>
<organism>
    <name type="scientific">Bacillus anthracis (strain A0248)</name>
    <dbReference type="NCBI Taxonomy" id="592021"/>
    <lineage>
        <taxon>Bacteria</taxon>
        <taxon>Bacillati</taxon>
        <taxon>Bacillota</taxon>
        <taxon>Bacilli</taxon>
        <taxon>Bacillales</taxon>
        <taxon>Bacillaceae</taxon>
        <taxon>Bacillus</taxon>
        <taxon>Bacillus cereus group</taxon>
    </lineage>
</organism>
<sequence length="139" mass="16525">MLQGINHICFSVSNLEKSIEFYQKILQAKLLVKGRKLAYFDLNGLWIALNVEEDIPRNEIKQSYTHMAFTVTNEALDHLKEVLIQNDVNILPGRERDERDQRSLYFTDPDGHKFEFHTGTLQNRLEYYKEDKKHMTFYI</sequence>
<evidence type="ECO:0000255" key="1">
    <source>
        <dbReference type="HAMAP-Rule" id="MF_01512"/>
    </source>
</evidence>
<evidence type="ECO:0000255" key="2">
    <source>
        <dbReference type="PROSITE-ProRule" id="PRU01163"/>
    </source>
</evidence>
<accession>C3P6D6</accession>
<protein>
    <recommendedName>
        <fullName evidence="1">Metallothiol transferase FosB 2</fullName>
        <ecNumber evidence="1">2.5.1.-</ecNumber>
    </recommendedName>
    <alternativeName>
        <fullName evidence="1">Fosfomycin resistance protein 2</fullName>
    </alternativeName>
</protein>
<name>FOSB2_BACAA</name>
<comment type="function">
    <text evidence="1">Metallothiol transferase which confers resistance to fosfomycin by catalyzing the addition of a thiol cofactor to fosfomycin. L-cysteine is probably the physiological thiol donor.</text>
</comment>
<comment type="cofactor">
    <cofactor evidence="1">
        <name>Mg(2+)</name>
        <dbReference type="ChEBI" id="CHEBI:18420"/>
    </cofactor>
</comment>
<comment type="subunit">
    <text evidence="1">Homodimer.</text>
</comment>
<comment type="subcellular location">
    <subcellularLocation>
        <location evidence="1">Cytoplasm</location>
    </subcellularLocation>
</comment>
<comment type="similarity">
    <text evidence="1">Belongs to the fosfomycin resistance protein family. FosB subfamily.</text>
</comment>
<proteinExistence type="inferred from homology"/>